<proteinExistence type="inferred from homology"/>
<feature type="chain" id="PRO_1000202652" description="Phosphomethylpyrimidine synthase">
    <location>
        <begin position="1"/>
        <end position="573"/>
    </location>
</feature>
<feature type="binding site" evidence="1">
    <location>
        <position position="190"/>
    </location>
    <ligand>
        <name>substrate</name>
    </ligand>
</feature>
<feature type="binding site" evidence="1">
    <location>
        <position position="219"/>
    </location>
    <ligand>
        <name>substrate</name>
    </ligand>
</feature>
<feature type="binding site" evidence="1">
    <location>
        <position position="248"/>
    </location>
    <ligand>
        <name>substrate</name>
    </ligand>
</feature>
<feature type="binding site" evidence="1">
    <location>
        <position position="284"/>
    </location>
    <ligand>
        <name>substrate</name>
    </ligand>
</feature>
<feature type="binding site" evidence="1">
    <location>
        <begin position="304"/>
        <end position="306"/>
    </location>
    <ligand>
        <name>substrate</name>
    </ligand>
</feature>
<feature type="binding site" evidence="1">
    <location>
        <begin position="345"/>
        <end position="348"/>
    </location>
    <ligand>
        <name>substrate</name>
    </ligand>
</feature>
<feature type="binding site" evidence="1">
    <location>
        <position position="384"/>
    </location>
    <ligand>
        <name>substrate</name>
    </ligand>
</feature>
<feature type="binding site" evidence="1">
    <location>
        <position position="388"/>
    </location>
    <ligand>
        <name>Zn(2+)</name>
        <dbReference type="ChEBI" id="CHEBI:29105"/>
    </ligand>
</feature>
<feature type="binding site" evidence="1">
    <location>
        <position position="411"/>
    </location>
    <ligand>
        <name>substrate</name>
    </ligand>
</feature>
<feature type="binding site" evidence="1">
    <location>
        <position position="452"/>
    </location>
    <ligand>
        <name>Zn(2+)</name>
        <dbReference type="ChEBI" id="CHEBI:29105"/>
    </ligand>
</feature>
<feature type="binding site" evidence="1">
    <location>
        <position position="532"/>
    </location>
    <ligand>
        <name>[4Fe-4S] cluster</name>
        <dbReference type="ChEBI" id="CHEBI:49883"/>
        <note>4Fe-4S-S-AdoMet</note>
    </ligand>
</feature>
<feature type="binding site" evidence="1">
    <location>
        <position position="535"/>
    </location>
    <ligand>
        <name>[4Fe-4S] cluster</name>
        <dbReference type="ChEBI" id="CHEBI:49883"/>
        <note>4Fe-4S-S-AdoMet</note>
    </ligand>
</feature>
<feature type="binding site" evidence="1">
    <location>
        <position position="540"/>
    </location>
    <ligand>
        <name>[4Fe-4S] cluster</name>
        <dbReference type="ChEBI" id="CHEBI:49883"/>
        <note>4Fe-4S-S-AdoMet</note>
    </ligand>
</feature>
<accession>C5D571</accession>
<protein>
    <recommendedName>
        <fullName evidence="1">Phosphomethylpyrimidine synthase</fullName>
        <ecNumber evidence="1">4.1.99.17</ecNumber>
    </recommendedName>
    <alternativeName>
        <fullName evidence="1">Hydroxymethylpyrimidine phosphate synthase</fullName>
        <shortName evidence="1">HMP-P synthase</shortName>
        <shortName evidence="1">HMP-phosphate synthase</shortName>
        <shortName evidence="1">HMPP synthase</shortName>
    </alternativeName>
    <alternativeName>
        <fullName evidence="1">Thiamine biosynthesis protein ThiC</fullName>
    </alternativeName>
</protein>
<evidence type="ECO:0000255" key="1">
    <source>
        <dbReference type="HAMAP-Rule" id="MF_00089"/>
    </source>
</evidence>
<gene>
    <name evidence="1" type="primary">thiC</name>
    <name type="ordered locus">GWCH70_0374</name>
</gene>
<sequence>MQNIKSFMQFPASKKVYVEGSRPDIRVPMREITLSPTKTETGIIENEPVRVYDTSGPYTDPDFQPDIQKGLPPLRKRWILERGDVEEYEGRPVKPEDNGFRNGKQSEITLPFERKPLRAKKGKTVTQMHYAKRGIITPEMEFVAIRENIDPEIVRQEVAAGRAIIPSNINHPESEPMIIGSRFHVKINANIGNSAVTSSIEEEVEKMLWAVRWGADTIMDLSTGKHIHATREYIIRNSPVPVGTVPIYQALEKVNGVVEDLTWEIYRDTLIEQAEQGVDYFTIHAGVLLRYIPMTVNRTTGIVSRGGSIMAQWCLAHHEENFLYTHFEEICEILKTYDIAVSLGDGLRPGSIADANDEAQFAELETLGELTEIAWKHDVQVMIEGPGHVPMHKIKENVDKQIEICKGAPFYTLGPLTTDIAPGYDHITSAIGAAIIGAYGTAMLCYVTPKEHLGLPNKDDVREGVIAYKIAAHAADLAKGHPGAQRRDDALSKARFEFRWNDQFNLSLDPDRAREYHDETLPAEGAKVAHFCSMCGPKFCSMKISHELQKTVREEGMKQKAKEFVENGSSLYR</sequence>
<keyword id="KW-0004">4Fe-4S</keyword>
<keyword id="KW-0408">Iron</keyword>
<keyword id="KW-0411">Iron-sulfur</keyword>
<keyword id="KW-0456">Lyase</keyword>
<keyword id="KW-0479">Metal-binding</keyword>
<keyword id="KW-0949">S-adenosyl-L-methionine</keyword>
<keyword id="KW-0784">Thiamine biosynthesis</keyword>
<keyword id="KW-0862">Zinc</keyword>
<dbReference type="EC" id="4.1.99.17" evidence="1"/>
<dbReference type="EMBL" id="CP001638">
    <property type="protein sequence ID" value="ACS23297.1"/>
    <property type="molecule type" value="Genomic_DNA"/>
</dbReference>
<dbReference type="SMR" id="C5D571"/>
<dbReference type="STRING" id="471223.GWCH70_0374"/>
<dbReference type="KEGG" id="gwc:GWCH70_0374"/>
<dbReference type="eggNOG" id="COG0422">
    <property type="taxonomic scope" value="Bacteria"/>
</dbReference>
<dbReference type="HOGENOM" id="CLU_013181_2_1_9"/>
<dbReference type="OrthoDB" id="9805897at2"/>
<dbReference type="UniPathway" id="UPA00060"/>
<dbReference type="GO" id="GO:0005829">
    <property type="term" value="C:cytosol"/>
    <property type="evidence" value="ECO:0007669"/>
    <property type="project" value="TreeGrafter"/>
</dbReference>
<dbReference type="GO" id="GO:0051539">
    <property type="term" value="F:4 iron, 4 sulfur cluster binding"/>
    <property type="evidence" value="ECO:0007669"/>
    <property type="project" value="UniProtKB-KW"/>
</dbReference>
<dbReference type="GO" id="GO:0016830">
    <property type="term" value="F:carbon-carbon lyase activity"/>
    <property type="evidence" value="ECO:0007669"/>
    <property type="project" value="InterPro"/>
</dbReference>
<dbReference type="GO" id="GO:0008270">
    <property type="term" value="F:zinc ion binding"/>
    <property type="evidence" value="ECO:0007669"/>
    <property type="project" value="UniProtKB-UniRule"/>
</dbReference>
<dbReference type="GO" id="GO:0009228">
    <property type="term" value="P:thiamine biosynthetic process"/>
    <property type="evidence" value="ECO:0007669"/>
    <property type="project" value="UniProtKB-KW"/>
</dbReference>
<dbReference type="GO" id="GO:0009229">
    <property type="term" value="P:thiamine diphosphate biosynthetic process"/>
    <property type="evidence" value="ECO:0007669"/>
    <property type="project" value="UniProtKB-UniRule"/>
</dbReference>
<dbReference type="FunFam" id="3.20.20.540:FF:000001">
    <property type="entry name" value="Phosphomethylpyrimidine synthase"/>
    <property type="match status" value="1"/>
</dbReference>
<dbReference type="Gene3D" id="6.10.250.620">
    <property type="match status" value="1"/>
</dbReference>
<dbReference type="Gene3D" id="3.20.20.540">
    <property type="entry name" value="Radical SAM ThiC family, central domain"/>
    <property type="match status" value="1"/>
</dbReference>
<dbReference type="HAMAP" id="MF_00089">
    <property type="entry name" value="ThiC"/>
    <property type="match status" value="1"/>
</dbReference>
<dbReference type="InterPro" id="IPR037509">
    <property type="entry name" value="ThiC"/>
</dbReference>
<dbReference type="InterPro" id="IPR025747">
    <property type="entry name" value="ThiC-associated_dom"/>
</dbReference>
<dbReference type="InterPro" id="IPR038521">
    <property type="entry name" value="ThiC/Bza_core_dom"/>
</dbReference>
<dbReference type="InterPro" id="IPR002817">
    <property type="entry name" value="ThiC/BzaA/B"/>
</dbReference>
<dbReference type="NCBIfam" id="NF006763">
    <property type="entry name" value="PRK09284.1"/>
    <property type="match status" value="1"/>
</dbReference>
<dbReference type="NCBIfam" id="NF009895">
    <property type="entry name" value="PRK13352.1"/>
    <property type="match status" value="1"/>
</dbReference>
<dbReference type="NCBIfam" id="TIGR00190">
    <property type="entry name" value="thiC"/>
    <property type="match status" value="1"/>
</dbReference>
<dbReference type="PANTHER" id="PTHR30557:SF1">
    <property type="entry name" value="PHOSPHOMETHYLPYRIMIDINE SYNTHASE, CHLOROPLASTIC"/>
    <property type="match status" value="1"/>
</dbReference>
<dbReference type="PANTHER" id="PTHR30557">
    <property type="entry name" value="THIAMINE BIOSYNTHESIS PROTEIN THIC"/>
    <property type="match status" value="1"/>
</dbReference>
<dbReference type="Pfam" id="PF13667">
    <property type="entry name" value="ThiC-associated"/>
    <property type="match status" value="1"/>
</dbReference>
<dbReference type="Pfam" id="PF01964">
    <property type="entry name" value="ThiC_Rad_SAM"/>
    <property type="match status" value="1"/>
</dbReference>
<dbReference type="SFLD" id="SFLDF00407">
    <property type="entry name" value="phosphomethylpyrimidine_syntha"/>
    <property type="match status" value="1"/>
</dbReference>
<dbReference type="SFLD" id="SFLDG01114">
    <property type="entry name" value="phosphomethylpyrimidine_syntha"/>
    <property type="match status" value="1"/>
</dbReference>
<dbReference type="SFLD" id="SFLDS00113">
    <property type="entry name" value="Radical_SAM_Phosphomethylpyrim"/>
    <property type="match status" value="1"/>
</dbReference>
<name>THIC_GEOSW</name>
<comment type="function">
    <text evidence="1">Catalyzes the synthesis of the hydroxymethylpyrimidine phosphate (HMP-P) moiety of thiamine from aminoimidazole ribotide (AIR) in a radical S-adenosyl-L-methionine (SAM)-dependent reaction.</text>
</comment>
<comment type="catalytic activity">
    <reaction evidence="1">
        <text>5-amino-1-(5-phospho-beta-D-ribosyl)imidazole + S-adenosyl-L-methionine = 4-amino-2-methyl-5-(phosphooxymethyl)pyrimidine + CO + 5'-deoxyadenosine + formate + L-methionine + 3 H(+)</text>
        <dbReference type="Rhea" id="RHEA:24840"/>
        <dbReference type="ChEBI" id="CHEBI:15378"/>
        <dbReference type="ChEBI" id="CHEBI:15740"/>
        <dbReference type="ChEBI" id="CHEBI:17245"/>
        <dbReference type="ChEBI" id="CHEBI:17319"/>
        <dbReference type="ChEBI" id="CHEBI:57844"/>
        <dbReference type="ChEBI" id="CHEBI:58354"/>
        <dbReference type="ChEBI" id="CHEBI:59789"/>
        <dbReference type="ChEBI" id="CHEBI:137981"/>
        <dbReference type="EC" id="4.1.99.17"/>
    </reaction>
</comment>
<comment type="cofactor">
    <cofactor evidence="1">
        <name>[4Fe-4S] cluster</name>
        <dbReference type="ChEBI" id="CHEBI:49883"/>
    </cofactor>
    <text evidence="1">Binds 1 [4Fe-4S] cluster per subunit. The cluster is coordinated with 3 cysteines and an exchangeable S-adenosyl-L-methionine.</text>
</comment>
<comment type="pathway">
    <text evidence="1">Cofactor biosynthesis; thiamine diphosphate biosynthesis.</text>
</comment>
<comment type="similarity">
    <text evidence="1">Belongs to the ThiC family.</text>
</comment>
<organism>
    <name type="scientific">Geobacillus sp. (strain WCH70)</name>
    <dbReference type="NCBI Taxonomy" id="471223"/>
    <lineage>
        <taxon>Bacteria</taxon>
        <taxon>Bacillati</taxon>
        <taxon>Bacillota</taxon>
        <taxon>Bacilli</taxon>
        <taxon>Bacillales</taxon>
        <taxon>Anoxybacillaceae</taxon>
        <taxon>Geobacillus</taxon>
    </lineage>
</organism>
<reference key="1">
    <citation type="submission" date="2009-06" db="EMBL/GenBank/DDBJ databases">
        <title>Complete sequence of chromosome of Geopacillus sp. WCH70.</title>
        <authorList>
            <consortium name="US DOE Joint Genome Institute"/>
            <person name="Lucas S."/>
            <person name="Copeland A."/>
            <person name="Lapidus A."/>
            <person name="Glavina del Rio T."/>
            <person name="Dalin E."/>
            <person name="Tice H."/>
            <person name="Bruce D."/>
            <person name="Goodwin L."/>
            <person name="Pitluck S."/>
            <person name="Chertkov O."/>
            <person name="Brettin T."/>
            <person name="Detter J.C."/>
            <person name="Han C."/>
            <person name="Larimer F."/>
            <person name="Land M."/>
            <person name="Hauser L."/>
            <person name="Kyrpides N."/>
            <person name="Mikhailova N."/>
            <person name="Brumm P."/>
            <person name="Mead D.A."/>
            <person name="Richardson P."/>
        </authorList>
    </citation>
    <scope>NUCLEOTIDE SEQUENCE [LARGE SCALE GENOMIC DNA]</scope>
    <source>
        <strain>WCH70</strain>
    </source>
</reference>